<organism>
    <name type="scientific">Nezara viridula</name>
    <name type="common">Southern green stink bug</name>
    <name type="synonym">Cimex viridulus</name>
    <dbReference type="NCBI Taxonomy" id="85310"/>
    <lineage>
        <taxon>Eukaryota</taxon>
        <taxon>Metazoa</taxon>
        <taxon>Ecdysozoa</taxon>
        <taxon>Arthropoda</taxon>
        <taxon>Hexapoda</taxon>
        <taxon>Insecta</taxon>
        <taxon>Pterygota</taxon>
        <taxon>Neoptera</taxon>
        <taxon>Paraneoptera</taxon>
        <taxon>Hemiptera</taxon>
        <taxon>Heteroptera</taxon>
        <taxon>Panheteroptera</taxon>
        <taxon>Pentatomomorpha</taxon>
        <taxon>Pentatomoidea</taxon>
        <taxon>Pentatomidae</taxon>
        <taxon>Pentatominae</taxon>
        <taxon>Nezara</taxon>
    </lineage>
</organism>
<name>TRP3_NEZVI</name>
<reference evidence="3" key="1">
    <citation type="journal article" date="2009" name="Peptides">
        <title>Neuropeptides in Heteroptera: identification of allatotropin-related peptide and tachykinin-related peptides using MALDI-TOF mass spectrometry.</title>
        <authorList>
            <person name="Neupert S."/>
            <person name="Russell W.K."/>
            <person name="Russell D.H."/>
            <person name="Lopez J.D. Jr."/>
            <person name="Predel R."/>
            <person name="Nachman R.J."/>
        </authorList>
    </citation>
    <scope>PROTEIN SEQUENCE</scope>
    <scope>SUBCELLULAR LOCATION</scope>
    <scope>TISSUE SPECIFICITY</scope>
    <scope>AMIDATION AT ARG-10</scope>
    <source>
        <tissue evidence="1">Antennal lobe</tissue>
    </source>
</reference>
<sequence length="10" mass="1042">GPSSGFFGMR</sequence>
<dbReference type="GO" id="GO:0005576">
    <property type="term" value="C:extracellular region"/>
    <property type="evidence" value="ECO:0007005"/>
    <property type="project" value="UniProtKB"/>
</dbReference>
<dbReference type="GO" id="GO:0007218">
    <property type="term" value="P:neuropeptide signaling pathway"/>
    <property type="evidence" value="ECO:0007669"/>
    <property type="project" value="UniProtKB-KW"/>
</dbReference>
<evidence type="ECO:0000269" key="1">
    <source>
    </source>
</evidence>
<evidence type="ECO:0000303" key="2">
    <source>
    </source>
</evidence>
<evidence type="ECO:0000305" key="3"/>
<protein>
    <recommendedName>
        <fullName evidence="2">Tachykinin-related peptide 3</fullName>
        <shortName evidence="2">TKRP-3</shortName>
    </recommendedName>
</protein>
<comment type="subcellular location">
    <subcellularLocation>
        <location evidence="1 3">Secreted</location>
    </subcellularLocation>
</comment>
<comment type="tissue specificity">
    <text evidence="1">Expressed in the antennal lobe (at protein level).</text>
</comment>
<accession>P86577</accession>
<keyword id="KW-0027">Amidation</keyword>
<keyword id="KW-0903">Direct protein sequencing</keyword>
<keyword id="KW-0527">Neuropeptide</keyword>
<keyword id="KW-0964">Secreted</keyword>
<feature type="peptide" id="PRO_0000395646" description="Tachykinin-related peptide 3" evidence="1">
    <location>
        <begin position="1"/>
        <end position="10"/>
    </location>
</feature>
<feature type="modified residue" description="Arginine amide" evidence="1">
    <location>
        <position position="10"/>
    </location>
</feature>
<proteinExistence type="evidence at protein level"/>